<accession>Q39KF3</accession>
<proteinExistence type="inferred from homology"/>
<name>RS8_BURL3</name>
<reference key="1">
    <citation type="submission" date="2005-10" db="EMBL/GenBank/DDBJ databases">
        <title>Complete sequence of chromosome 1 of Burkholderia sp. 383.</title>
        <authorList>
            <consortium name="US DOE Joint Genome Institute"/>
            <person name="Copeland A."/>
            <person name="Lucas S."/>
            <person name="Lapidus A."/>
            <person name="Barry K."/>
            <person name="Detter J.C."/>
            <person name="Glavina T."/>
            <person name="Hammon N."/>
            <person name="Israni S."/>
            <person name="Pitluck S."/>
            <person name="Chain P."/>
            <person name="Malfatti S."/>
            <person name="Shin M."/>
            <person name="Vergez L."/>
            <person name="Schmutz J."/>
            <person name="Larimer F."/>
            <person name="Land M."/>
            <person name="Kyrpides N."/>
            <person name="Lykidis A."/>
            <person name="Richardson P."/>
        </authorList>
    </citation>
    <scope>NUCLEOTIDE SEQUENCE [LARGE SCALE GENOMIC DNA]</scope>
    <source>
        <strain>ATCC 17760 / DSM 23089 / LMG 22485 / NCIMB 9086 / R18194 / 383</strain>
    </source>
</reference>
<evidence type="ECO:0000255" key="1">
    <source>
        <dbReference type="HAMAP-Rule" id="MF_01302"/>
    </source>
</evidence>
<evidence type="ECO:0000305" key="2"/>
<protein>
    <recommendedName>
        <fullName evidence="1">Small ribosomal subunit protein uS8</fullName>
    </recommendedName>
    <alternativeName>
        <fullName evidence="2">30S ribosomal protein S8</fullName>
    </alternativeName>
</protein>
<organism>
    <name type="scientific">Burkholderia lata (strain ATCC 17760 / DSM 23089 / LMG 22485 / NCIMB 9086 / R18194 / 383)</name>
    <dbReference type="NCBI Taxonomy" id="482957"/>
    <lineage>
        <taxon>Bacteria</taxon>
        <taxon>Pseudomonadati</taxon>
        <taxon>Pseudomonadota</taxon>
        <taxon>Betaproteobacteria</taxon>
        <taxon>Burkholderiales</taxon>
        <taxon>Burkholderiaceae</taxon>
        <taxon>Burkholderia</taxon>
        <taxon>Burkholderia cepacia complex</taxon>
    </lineage>
</organism>
<gene>
    <name evidence="1" type="primary">rpsH</name>
    <name type="ordered locus">Bcep18194_A3461</name>
</gene>
<feature type="chain" id="PRO_0000225860" description="Small ribosomal subunit protein uS8">
    <location>
        <begin position="1"/>
        <end position="131"/>
    </location>
</feature>
<sequence>MSMSDPIADMLTRIRNGQMVEKVSVSMPSSKVKVAIAQVLKDEGYIDDFAVKAEGAKSELNIALKYYAGRPVIERIERVSKPGLRVYRGRNDIPQVMNGLGVAIVSTPKGVMTDRKARATGVGGEVICYVA</sequence>
<comment type="function">
    <text evidence="1">One of the primary rRNA binding proteins, it binds directly to 16S rRNA central domain where it helps coordinate assembly of the platform of the 30S subunit.</text>
</comment>
<comment type="subunit">
    <text evidence="1">Part of the 30S ribosomal subunit. Contacts proteins S5 and S12.</text>
</comment>
<comment type="similarity">
    <text evidence="1">Belongs to the universal ribosomal protein uS8 family.</text>
</comment>
<keyword id="KW-0687">Ribonucleoprotein</keyword>
<keyword id="KW-0689">Ribosomal protein</keyword>
<keyword id="KW-0694">RNA-binding</keyword>
<keyword id="KW-0699">rRNA-binding</keyword>
<dbReference type="EMBL" id="CP000151">
    <property type="protein sequence ID" value="ABB07063.1"/>
    <property type="molecule type" value="Genomic_DNA"/>
</dbReference>
<dbReference type="RefSeq" id="WP_011350677.1">
    <property type="nucleotide sequence ID" value="NZ_WNDV01000034.1"/>
</dbReference>
<dbReference type="SMR" id="Q39KF3"/>
<dbReference type="GeneID" id="93193437"/>
<dbReference type="KEGG" id="bur:Bcep18194_A3461"/>
<dbReference type="HOGENOM" id="CLU_098428_0_0_4"/>
<dbReference type="Proteomes" id="UP000002705">
    <property type="component" value="Chromosome 1"/>
</dbReference>
<dbReference type="GO" id="GO:1990904">
    <property type="term" value="C:ribonucleoprotein complex"/>
    <property type="evidence" value="ECO:0007669"/>
    <property type="project" value="UniProtKB-KW"/>
</dbReference>
<dbReference type="GO" id="GO:0005840">
    <property type="term" value="C:ribosome"/>
    <property type="evidence" value="ECO:0007669"/>
    <property type="project" value="UniProtKB-KW"/>
</dbReference>
<dbReference type="GO" id="GO:0019843">
    <property type="term" value="F:rRNA binding"/>
    <property type="evidence" value="ECO:0007669"/>
    <property type="project" value="UniProtKB-UniRule"/>
</dbReference>
<dbReference type="GO" id="GO:0003735">
    <property type="term" value="F:structural constituent of ribosome"/>
    <property type="evidence" value="ECO:0007669"/>
    <property type="project" value="InterPro"/>
</dbReference>
<dbReference type="GO" id="GO:0006412">
    <property type="term" value="P:translation"/>
    <property type="evidence" value="ECO:0007669"/>
    <property type="project" value="UniProtKB-UniRule"/>
</dbReference>
<dbReference type="FunFam" id="3.30.1370.30:FF:000003">
    <property type="entry name" value="30S ribosomal protein S8"/>
    <property type="match status" value="1"/>
</dbReference>
<dbReference type="FunFam" id="3.30.1490.10:FF:000001">
    <property type="entry name" value="30S ribosomal protein S8"/>
    <property type="match status" value="1"/>
</dbReference>
<dbReference type="Gene3D" id="3.30.1370.30">
    <property type="match status" value="1"/>
</dbReference>
<dbReference type="Gene3D" id="3.30.1490.10">
    <property type="match status" value="1"/>
</dbReference>
<dbReference type="HAMAP" id="MF_01302_B">
    <property type="entry name" value="Ribosomal_uS8_B"/>
    <property type="match status" value="1"/>
</dbReference>
<dbReference type="InterPro" id="IPR000630">
    <property type="entry name" value="Ribosomal_uS8"/>
</dbReference>
<dbReference type="InterPro" id="IPR047863">
    <property type="entry name" value="Ribosomal_uS8_CS"/>
</dbReference>
<dbReference type="InterPro" id="IPR035987">
    <property type="entry name" value="Ribosomal_uS8_sf"/>
</dbReference>
<dbReference type="NCBIfam" id="NF001109">
    <property type="entry name" value="PRK00136.1"/>
    <property type="match status" value="1"/>
</dbReference>
<dbReference type="PANTHER" id="PTHR11758">
    <property type="entry name" value="40S RIBOSOMAL PROTEIN S15A"/>
    <property type="match status" value="1"/>
</dbReference>
<dbReference type="Pfam" id="PF00410">
    <property type="entry name" value="Ribosomal_S8"/>
    <property type="match status" value="1"/>
</dbReference>
<dbReference type="SUPFAM" id="SSF56047">
    <property type="entry name" value="Ribosomal protein S8"/>
    <property type="match status" value="1"/>
</dbReference>
<dbReference type="PROSITE" id="PS00053">
    <property type="entry name" value="RIBOSOMAL_S8"/>
    <property type="match status" value="1"/>
</dbReference>